<keyword id="KW-0963">Cytoplasm</keyword>
<keyword id="KW-0251">Elongation factor</keyword>
<keyword id="KW-0342">GTP-binding</keyword>
<keyword id="KW-0378">Hydrolase</keyword>
<keyword id="KW-0460">Magnesium</keyword>
<keyword id="KW-0479">Metal-binding</keyword>
<keyword id="KW-0547">Nucleotide-binding</keyword>
<keyword id="KW-0648">Protein biosynthesis</keyword>
<keyword id="KW-1185">Reference proteome</keyword>
<feature type="chain" id="PRO_0000091346" description="Elongation factor Tu">
    <location>
        <begin position="1"/>
        <end position="394"/>
    </location>
</feature>
<feature type="domain" description="tr-type G">
    <location>
        <begin position="10"/>
        <end position="204"/>
    </location>
</feature>
<feature type="region of interest" description="G1" evidence="1">
    <location>
        <begin position="19"/>
        <end position="26"/>
    </location>
</feature>
<feature type="region of interest" description="G2" evidence="1">
    <location>
        <begin position="60"/>
        <end position="64"/>
    </location>
</feature>
<feature type="region of interest" description="G3" evidence="1">
    <location>
        <begin position="81"/>
        <end position="84"/>
    </location>
</feature>
<feature type="region of interest" description="G4" evidence="1">
    <location>
        <begin position="136"/>
        <end position="139"/>
    </location>
</feature>
<feature type="region of interest" description="G5" evidence="1">
    <location>
        <begin position="174"/>
        <end position="176"/>
    </location>
</feature>
<feature type="binding site" evidence="2">
    <location>
        <begin position="19"/>
        <end position="26"/>
    </location>
    <ligand>
        <name>GTP</name>
        <dbReference type="ChEBI" id="CHEBI:37565"/>
    </ligand>
</feature>
<feature type="binding site" evidence="2">
    <location>
        <position position="26"/>
    </location>
    <ligand>
        <name>Mg(2+)</name>
        <dbReference type="ChEBI" id="CHEBI:18420"/>
    </ligand>
</feature>
<feature type="binding site" evidence="2">
    <location>
        <begin position="81"/>
        <end position="85"/>
    </location>
    <ligand>
        <name>GTP</name>
        <dbReference type="ChEBI" id="CHEBI:37565"/>
    </ligand>
</feature>
<feature type="binding site" evidence="2">
    <location>
        <begin position="136"/>
        <end position="139"/>
    </location>
    <ligand>
        <name>GTP</name>
        <dbReference type="ChEBI" id="CHEBI:37565"/>
    </ligand>
</feature>
<feature type="sequence conflict" description="In Ref. 3; AAD12520." evidence="3" ref="3">
    <original>T</original>
    <variation>N</variation>
    <location>
        <position position="220"/>
    </location>
</feature>
<name>EFTU_MYCGE</name>
<organism>
    <name type="scientific">Mycoplasma genitalium (strain ATCC 33530 / DSM 19775 / NCTC 10195 / G37)</name>
    <name type="common">Mycoplasmoides genitalium</name>
    <dbReference type="NCBI Taxonomy" id="243273"/>
    <lineage>
        <taxon>Bacteria</taxon>
        <taxon>Bacillati</taxon>
        <taxon>Mycoplasmatota</taxon>
        <taxon>Mycoplasmoidales</taxon>
        <taxon>Mycoplasmoidaceae</taxon>
        <taxon>Mycoplasmoides</taxon>
    </lineage>
</organism>
<proteinExistence type="inferred from homology"/>
<protein>
    <recommendedName>
        <fullName evidence="2">Elongation factor Tu</fullName>
        <shortName evidence="2">EF-Tu</shortName>
        <ecNumber evidence="2">3.6.5.3</ecNumber>
    </recommendedName>
</protein>
<evidence type="ECO:0000250" key="1"/>
<evidence type="ECO:0000255" key="2">
    <source>
        <dbReference type="HAMAP-Rule" id="MF_00118"/>
    </source>
</evidence>
<evidence type="ECO:0000305" key="3"/>
<dbReference type="EC" id="3.6.5.3" evidence="2"/>
<dbReference type="EMBL" id="X16463">
    <property type="protein sequence ID" value="CAA34483.1"/>
    <property type="molecule type" value="Genomic_DNA"/>
</dbReference>
<dbReference type="EMBL" id="L43967">
    <property type="protein sequence ID" value="AAC72471.1"/>
    <property type="molecule type" value="Genomic_DNA"/>
</dbReference>
<dbReference type="EMBL" id="U02255">
    <property type="protein sequence ID" value="AAD12520.1"/>
    <property type="molecule type" value="Genomic_DNA"/>
</dbReference>
<dbReference type="PIR" id="S14909">
    <property type="entry name" value="EFYMTG"/>
</dbReference>
<dbReference type="RefSeq" id="WP_009885583.1">
    <property type="nucleotide sequence ID" value="NC_000908.2"/>
</dbReference>
<dbReference type="SMR" id="P13927"/>
<dbReference type="FunCoup" id="P13927">
    <property type="interactions" value="210"/>
</dbReference>
<dbReference type="STRING" id="243273.MG_451"/>
<dbReference type="GeneID" id="88282631"/>
<dbReference type="KEGG" id="mge:MG_451"/>
<dbReference type="eggNOG" id="COG0050">
    <property type="taxonomic scope" value="Bacteria"/>
</dbReference>
<dbReference type="HOGENOM" id="CLU_007265_0_1_14"/>
<dbReference type="InParanoid" id="P13927"/>
<dbReference type="OrthoDB" id="9804504at2"/>
<dbReference type="BioCyc" id="MGEN243273:G1GJ2-544-MONOMER"/>
<dbReference type="Proteomes" id="UP000000807">
    <property type="component" value="Chromosome"/>
</dbReference>
<dbReference type="GO" id="GO:0005737">
    <property type="term" value="C:cytoplasm"/>
    <property type="evidence" value="ECO:0007669"/>
    <property type="project" value="UniProtKB-SubCell"/>
</dbReference>
<dbReference type="GO" id="GO:0005525">
    <property type="term" value="F:GTP binding"/>
    <property type="evidence" value="ECO:0007669"/>
    <property type="project" value="UniProtKB-UniRule"/>
</dbReference>
<dbReference type="GO" id="GO:0003924">
    <property type="term" value="F:GTPase activity"/>
    <property type="evidence" value="ECO:0007669"/>
    <property type="project" value="InterPro"/>
</dbReference>
<dbReference type="GO" id="GO:0003746">
    <property type="term" value="F:translation elongation factor activity"/>
    <property type="evidence" value="ECO:0000318"/>
    <property type="project" value="GO_Central"/>
</dbReference>
<dbReference type="GO" id="GO:0006414">
    <property type="term" value="P:translational elongation"/>
    <property type="evidence" value="ECO:0000318"/>
    <property type="project" value="GO_Central"/>
</dbReference>
<dbReference type="CDD" id="cd01884">
    <property type="entry name" value="EF_Tu"/>
    <property type="match status" value="1"/>
</dbReference>
<dbReference type="CDD" id="cd03697">
    <property type="entry name" value="EFTU_II"/>
    <property type="match status" value="1"/>
</dbReference>
<dbReference type="CDD" id="cd03707">
    <property type="entry name" value="EFTU_III"/>
    <property type="match status" value="1"/>
</dbReference>
<dbReference type="FunFam" id="2.40.30.10:FF:000001">
    <property type="entry name" value="Elongation factor Tu"/>
    <property type="match status" value="1"/>
</dbReference>
<dbReference type="FunFam" id="3.40.50.300:FF:000003">
    <property type="entry name" value="Elongation factor Tu"/>
    <property type="match status" value="1"/>
</dbReference>
<dbReference type="Gene3D" id="3.40.50.300">
    <property type="entry name" value="P-loop containing nucleotide triphosphate hydrolases"/>
    <property type="match status" value="1"/>
</dbReference>
<dbReference type="Gene3D" id="2.40.30.10">
    <property type="entry name" value="Translation factors"/>
    <property type="match status" value="2"/>
</dbReference>
<dbReference type="HAMAP" id="MF_00118_B">
    <property type="entry name" value="EF_Tu_B"/>
    <property type="match status" value="1"/>
</dbReference>
<dbReference type="InterPro" id="IPR041709">
    <property type="entry name" value="EF-Tu_GTP-bd"/>
</dbReference>
<dbReference type="InterPro" id="IPR050055">
    <property type="entry name" value="EF-Tu_GTPase"/>
</dbReference>
<dbReference type="InterPro" id="IPR004161">
    <property type="entry name" value="EFTu-like_2"/>
</dbReference>
<dbReference type="InterPro" id="IPR033720">
    <property type="entry name" value="EFTU_2"/>
</dbReference>
<dbReference type="InterPro" id="IPR031157">
    <property type="entry name" value="G_TR_CS"/>
</dbReference>
<dbReference type="InterPro" id="IPR027417">
    <property type="entry name" value="P-loop_NTPase"/>
</dbReference>
<dbReference type="InterPro" id="IPR005225">
    <property type="entry name" value="Small_GTP-bd"/>
</dbReference>
<dbReference type="InterPro" id="IPR000795">
    <property type="entry name" value="T_Tr_GTP-bd_dom"/>
</dbReference>
<dbReference type="InterPro" id="IPR009000">
    <property type="entry name" value="Transl_B-barrel_sf"/>
</dbReference>
<dbReference type="InterPro" id="IPR009001">
    <property type="entry name" value="Transl_elong_EF1A/Init_IF2_C"/>
</dbReference>
<dbReference type="InterPro" id="IPR004541">
    <property type="entry name" value="Transl_elong_EFTu/EF1A_bac/org"/>
</dbReference>
<dbReference type="InterPro" id="IPR004160">
    <property type="entry name" value="Transl_elong_EFTu/EF1A_C"/>
</dbReference>
<dbReference type="NCBIfam" id="TIGR00485">
    <property type="entry name" value="EF-Tu"/>
    <property type="match status" value="1"/>
</dbReference>
<dbReference type="NCBIfam" id="NF000766">
    <property type="entry name" value="PRK00049.1"/>
    <property type="match status" value="1"/>
</dbReference>
<dbReference type="NCBIfam" id="NF009372">
    <property type="entry name" value="PRK12735.1"/>
    <property type="match status" value="1"/>
</dbReference>
<dbReference type="NCBIfam" id="NF009373">
    <property type="entry name" value="PRK12736.1"/>
    <property type="match status" value="1"/>
</dbReference>
<dbReference type="NCBIfam" id="TIGR00231">
    <property type="entry name" value="small_GTP"/>
    <property type="match status" value="1"/>
</dbReference>
<dbReference type="PANTHER" id="PTHR43721:SF22">
    <property type="entry name" value="ELONGATION FACTOR TU, MITOCHONDRIAL"/>
    <property type="match status" value="1"/>
</dbReference>
<dbReference type="PANTHER" id="PTHR43721">
    <property type="entry name" value="ELONGATION FACTOR TU-RELATED"/>
    <property type="match status" value="1"/>
</dbReference>
<dbReference type="Pfam" id="PF00009">
    <property type="entry name" value="GTP_EFTU"/>
    <property type="match status" value="1"/>
</dbReference>
<dbReference type="Pfam" id="PF03144">
    <property type="entry name" value="GTP_EFTU_D2"/>
    <property type="match status" value="1"/>
</dbReference>
<dbReference type="Pfam" id="PF03143">
    <property type="entry name" value="GTP_EFTU_D3"/>
    <property type="match status" value="1"/>
</dbReference>
<dbReference type="PRINTS" id="PR00315">
    <property type="entry name" value="ELONGATNFCT"/>
</dbReference>
<dbReference type="SUPFAM" id="SSF50465">
    <property type="entry name" value="EF-Tu/eEF-1alpha/eIF2-gamma C-terminal domain"/>
    <property type="match status" value="1"/>
</dbReference>
<dbReference type="SUPFAM" id="SSF52540">
    <property type="entry name" value="P-loop containing nucleoside triphosphate hydrolases"/>
    <property type="match status" value="1"/>
</dbReference>
<dbReference type="SUPFAM" id="SSF50447">
    <property type="entry name" value="Translation proteins"/>
    <property type="match status" value="1"/>
</dbReference>
<dbReference type="PROSITE" id="PS00301">
    <property type="entry name" value="G_TR_1"/>
    <property type="match status" value="1"/>
</dbReference>
<dbReference type="PROSITE" id="PS51722">
    <property type="entry name" value="G_TR_2"/>
    <property type="match status" value="1"/>
</dbReference>
<accession>P13927</accession>
<accession>Q49360</accession>
<comment type="function">
    <text evidence="2">GTP hydrolase that promotes the GTP-dependent binding of aminoacyl-tRNA to the A-site of ribosomes during protein biosynthesis.</text>
</comment>
<comment type="catalytic activity">
    <reaction evidence="2">
        <text>GTP + H2O = GDP + phosphate + H(+)</text>
        <dbReference type="Rhea" id="RHEA:19669"/>
        <dbReference type="ChEBI" id="CHEBI:15377"/>
        <dbReference type="ChEBI" id="CHEBI:15378"/>
        <dbReference type="ChEBI" id="CHEBI:37565"/>
        <dbReference type="ChEBI" id="CHEBI:43474"/>
        <dbReference type="ChEBI" id="CHEBI:58189"/>
        <dbReference type="EC" id="3.6.5.3"/>
    </reaction>
    <physiologicalReaction direction="left-to-right" evidence="2">
        <dbReference type="Rhea" id="RHEA:19670"/>
    </physiologicalReaction>
</comment>
<comment type="subunit">
    <text evidence="2">Monomer.</text>
</comment>
<comment type="subcellular location">
    <subcellularLocation>
        <location evidence="2">Cytoplasm</location>
    </subcellularLocation>
</comment>
<comment type="similarity">
    <text evidence="2">Belongs to the TRAFAC class translation factor GTPase superfamily. Classic translation factor GTPase family. EF-Tu/EF-1A subfamily.</text>
</comment>
<sequence length="394" mass="42990">MAREKFDRSKPHVNVGTIGHIDHGKTTLTAAICTVLAKEGKSAATRYDEIDKAPEEKARGITINSAHVEYSSDKRHYAHVDCPGHADYIKNMITGAAQMDGAILVVSATDSVMPQTREHILLARQVGVPKMVVFLNKCDIASDEEVQELVAEEVRDLLTSYGFDGKNTPIIYGSALKALEGDPKWEAKIHDLIKAVDEWIPTPTREVDKPFLLAIEDTMTITGRGTVVTGRVERGELKVGQEVEIVGLKPIRKAVVTGIEMFKKELDSAMAGDNAGVLLRGVERKEVERGQVLAKPGSIKPHKKFKAEIYALKKEEGGRHTGFLNGYRPQFYFRTTDVTGSIALAENTEMVLPGDNASITVELIAPIACEKGSKFSIREGGRTVGAGTVTEVLE</sequence>
<reference key="1">
    <citation type="journal article" date="1989" name="Nucleic Acids Res.">
        <title>Nucleotide sequence of the tuf gene from Mycoplasma genitalium.</title>
        <authorList>
            <person name="Inamine J.M."/>
            <person name="Loechel S."/>
            <person name="Hu P.-C."/>
        </authorList>
    </citation>
    <scope>NUCLEOTIDE SEQUENCE [GENOMIC DNA]</scope>
    <source>
        <strain>ATCC 33530 / DSM 19775 / NCTC 10195 / G37</strain>
    </source>
</reference>
<reference key="2">
    <citation type="journal article" date="1995" name="Science">
        <title>The minimal gene complement of Mycoplasma genitalium.</title>
        <authorList>
            <person name="Fraser C.M."/>
            <person name="Gocayne J.D."/>
            <person name="White O."/>
            <person name="Adams M.D."/>
            <person name="Clayton R.A."/>
            <person name="Fleischmann R.D."/>
            <person name="Bult C.J."/>
            <person name="Kerlavage A.R."/>
            <person name="Sutton G.G."/>
            <person name="Kelley J.M."/>
            <person name="Fritchman J.L."/>
            <person name="Weidman J.F."/>
            <person name="Small K.V."/>
            <person name="Sandusky M."/>
            <person name="Fuhrmann J.L."/>
            <person name="Nguyen D.T."/>
            <person name="Utterback T.R."/>
            <person name="Saudek D.M."/>
            <person name="Phillips C.A."/>
            <person name="Merrick J.M."/>
            <person name="Tomb J.-F."/>
            <person name="Dougherty B.A."/>
            <person name="Bott K.F."/>
            <person name="Hu P.-C."/>
            <person name="Lucier T.S."/>
            <person name="Peterson S.N."/>
            <person name="Smith H.O."/>
            <person name="Hutchison C.A. III"/>
            <person name="Venter J.C."/>
        </authorList>
    </citation>
    <scope>NUCLEOTIDE SEQUENCE [LARGE SCALE GENOMIC DNA]</scope>
    <source>
        <strain>ATCC 33530 / DSM 19775 / NCTC 10195 / G37</strain>
    </source>
</reference>
<reference key="3">
    <citation type="journal article" date="1993" name="J. Bacteriol.">
        <title>A survey of the Mycoplasma genitalium genome by using random sequencing.</title>
        <authorList>
            <person name="Peterson S.N."/>
            <person name="Hu P.-C."/>
            <person name="Bott K.F."/>
            <person name="Hutchison C.A. III"/>
        </authorList>
    </citation>
    <scope>NUCLEOTIDE SEQUENCE [GENOMIC DNA] OF 196-309</scope>
    <source>
        <strain>ATCC 33530 / DSM 19775 / NCTC 10195 / G37</strain>
    </source>
</reference>
<gene>
    <name evidence="2" type="primary">tuf</name>
    <name type="ordered locus">MG451</name>
</gene>